<name>PTGA_ECOLI</name>
<comment type="function">
    <text evidence="2 3 5 16">The phosphoenolpyruvate-dependent sugar phosphotransferase system (sugar PTS), a major carbohydrate active transport system, catalyzes the phosphorylation of incoming sugar substrates concomitantly with their translocation across the cell membrane (PubMed:17158705, PubMed:3129430). The enzyme II complex composed of PtsG and Crr is involved in glucose transport (PubMed:2657735). The non-phosphorylated EIII-Glc is an inhibitor for uptake of certain sugars such as maltose, melibiose, lactose, and glycerol. Phosphorylated EIII-Glc, however, may be an activator for adenylate cyclase. It is an important regulatory protein for cell metabolism (PubMed:789369).</text>
</comment>
<comment type="cofactor">
    <cofactor evidence="6 9">
        <name>Zn(2+)</name>
        <dbReference type="ChEBI" id="CHEBI:29105"/>
    </cofactor>
    <text evidence="6">Binds 1 zinc ion per glycerol kinase EIIA-Glc dimer. The zinc ion is important for dimerization.</text>
</comment>
<comment type="subunit">
    <text evidence="6 7 18">Heterodimer with glycerol kinase (glpk).</text>
</comment>
<comment type="subcellular location">
    <subcellularLocation>
        <location evidence="15">Cytoplasm</location>
    </subcellularLocation>
</comment>
<comment type="domain">
    <text evidence="1">The EIIA domain is phosphorylated by phospho-HPr on a histidyl residue. Then, it transfers the phosphoryl group to the EIIB domain.</text>
</comment>
<comment type="disruption phenotype">
    <text evidence="5">In mutants defective in enzyme I and histidine-containing phosphate carrier protein (HPr), cells lacking this gene are able to grow on the non-PTS compounds such as glycerol, maltose, melibiose, mannose 6-phosphate, and alpha-glycerol phosphate.</text>
</comment>
<reference key="1">
    <citation type="journal article" date="1988" name="J. Bacteriol.">
        <title>The ptsH, ptsI, and crr genes of the Escherichia coli phosphoenolpyruvate-dependent phosphotransferase system: a complex operon with several modes of transcription.</title>
        <authorList>
            <person name="de Reuse H."/>
            <person name="Danchin A."/>
        </authorList>
    </citation>
    <scope>NUCLEOTIDE SEQUENCE [GENOMIC DNA]</scope>
</reference>
<reference key="2">
    <citation type="journal article" date="1987" name="J. Biol. Chem.">
        <title>Sugar transport by the bacterial phosphotransferase system. Molecular cloning and structural analysis of the Escherichia coli ptsH, ptsI, and crr genes.</title>
        <authorList>
            <person name="Saffen D.W."/>
            <person name="Presper K.A."/>
            <person name="Doering T.L."/>
            <person name="Roseman S."/>
        </authorList>
    </citation>
    <scope>NUCLEOTIDE SEQUENCE [GENOMIC DNA]</scope>
</reference>
<reference key="3">
    <citation type="journal article" date="1996" name="FEMS Microbiol. Lett.">
        <title>Identification of the pdxK gene that encodes pyridoxine (vitamin B6) kinase in Escherichia coli K-12.</title>
        <authorList>
            <person name="Yang Y."/>
            <person name="Zhao G."/>
            <person name="Winkler M.E."/>
        </authorList>
    </citation>
    <scope>NUCLEOTIDE SEQUENCE [GENOMIC DNA]</scope>
    <source>
        <strain>K12 / W3110 / ATCC 27325 / DSM 5911</strain>
    </source>
</reference>
<reference key="4">
    <citation type="journal article" date="1992" name="Mol. Biol. Evol.">
        <title>Molecular population genetics of Escherichia coli: DNA sequence diversity at the celC, crr, and gutB loci of natural isolates.</title>
        <authorList>
            <person name="Hall B.G."/>
            <person name="Sharp P.M."/>
        </authorList>
    </citation>
    <scope>NUCLEOTIDE SEQUENCE [GENOMIC DNA]</scope>
    <source>
        <strain>Various ECOR strains</strain>
    </source>
</reference>
<reference key="5">
    <citation type="journal article" date="1997" name="DNA Res.">
        <title>Construction of a contiguous 874-kb sequence of the Escherichia coli-K12 genome corresponding to 50.0-68.8 min on the linkage map and analysis of its sequence features.</title>
        <authorList>
            <person name="Yamamoto Y."/>
            <person name="Aiba H."/>
            <person name="Baba T."/>
            <person name="Hayashi K."/>
            <person name="Inada T."/>
            <person name="Isono K."/>
            <person name="Itoh T."/>
            <person name="Kimura S."/>
            <person name="Kitagawa M."/>
            <person name="Makino K."/>
            <person name="Miki T."/>
            <person name="Mitsuhashi N."/>
            <person name="Mizobuchi K."/>
            <person name="Mori H."/>
            <person name="Nakade S."/>
            <person name="Nakamura Y."/>
            <person name="Nashimoto H."/>
            <person name="Oshima T."/>
            <person name="Oyama S."/>
            <person name="Saito N."/>
            <person name="Sampei G."/>
            <person name="Satoh Y."/>
            <person name="Sivasundaram S."/>
            <person name="Tagami H."/>
            <person name="Takahashi H."/>
            <person name="Takeda J."/>
            <person name="Takemoto K."/>
            <person name="Uehara K."/>
            <person name="Wada C."/>
            <person name="Yamagata S."/>
            <person name="Horiuchi T."/>
        </authorList>
    </citation>
    <scope>NUCLEOTIDE SEQUENCE [LARGE SCALE GENOMIC DNA]</scope>
    <source>
        <strain>K12 / W3110 / ATCC 27325 / DSM 5911</strain>
    </source>
</reference>
<reference key="6">
    <citation type="journal article" date="1997" name="Science">
        <title>The complete genome sequence of Escherichia coli K-12.</title>
        <authorList>
            <person name="Blattner F.R."/>
            <person name="Plunkett G. III"/>
            <person name="Bloch C.A."/>
            <person name="Perna N.T."/>
            <person name="Burland V."/>
            <person name="Riley M."/>
            <person name="Collado-Vides J."/>
            <person name="Glasner J.D."/>
            <person name="Rode C.K."/>
            <person name="Mayhew G.F."/>
            <person name="Gregor J."/>
            <person name="Davis N.W."/>
            <person name="Kirkpatrick H.A."/>
            <person name="Goeden M.A."/>
            <person name="Rose D.J."/>
            <person name="Mau B."/>
            <person name="Shao Y."/>
        </authorList>
    </citation>
    <scope>NUCLEOTIDE SEQUENCE [LARGE SCALE GENOMIC DNA]</scope>
    <source>
        <strain>K12 / MG1655 / ATCC 47076</strain>
    </source>
</reference>
<reference key="7">
    <citation type="journal article" date="2006" name="Mol. Syst. Biol.">
        <title>Highly accurate genome sequences of Escherichia coli K-12 strains MG1655 and W3110.</title>
        <authorList>
            <person name="Hayashi K."/>
            <person name="Morooka N."/>
            <person name="Yamamoto Y."/>
            <person name="Fujita K."/>
            <person name="Isono K."/>
            <person name="Choi S."/>
            <person name="Ohtsubo E."/>
            <person name="Baba T."/>
            <person name="Wanner B.L."/>
            <person name="Mori H."/>
            <person name="Horiuchi T."/>
        </authorList>
    </citation>
    <scope>NUCLEOTIDE SEQUENCE [LARGE SCALE GENOMIC DNA]</scope>
    <source>
        <strain>K12 / W3110 / ATCC 27325 / DSM 5911</strain>
    </source>
</reference>
<reference key="8">
    <citation type="journal article" date="1997" name="Electrophoresis">
        <title>Comparing the predicted and observed properties of proteins encoded in the genome of Escherichia coli K-12.</title>
        <authorList>
            <person name="Link A.J."/>
            <person name="Robison K."/>
            <person name="Church G.M."/>
        </authorList>
    </citation>
    <scope>PROTEIN SEQUENCE OF 2-21</scope>
    <source>
        <strain>K12 / EMG2</strain>
    </source>
</reference>
<reference key="9">
    <citation type="submission" date="1994-09" db="UniProtKB">
        <authorList>
            <person name="Pasquali C."/>
            <person name="Sanchez J.-C."/>
            <person name="Ravier F."/>
            <person name="Golaz O."/>
            <person name="Hughes G.J."/>
            <person name="Frutiger S."/>
            <person name="Paquet N."/>
            <person name="Wilkins M."/>
            <person name="Appel R.D."/>
            <person name="Bairoch A."/>
            <person name="Hochstrasser D.F."/>
        </authorList>
    </citation>
    <scope>PROTEIN SEQUENCE OF 2-13</scope>
    <source>
        <strain>K12 / W3110 / ATCC 27325 / DSM 5911</strain>
    </source>
</reference>
<reference key="10">
    <citation type="journal article" date="1998" name="J. Mol. Biol.">
        <title>Protein identification with N and C-terminal sequence tags in proteome projects.</title>
        <authorList>
            <person name="Wilkins M.R."/>
            <person name="Gasteiger E."/>
            <person name="Tonella L."/>
            <person name="Ou K."/>
            <person name="Tyler M."/>
            <person name="Sanchez J.-C."/>
            <person name="Gooley A.A."/>
            <person name="Walsh B.J."/>
            <person name="Bairoch A."/>
            <person name="Appel R.D."/>
            <person name="Williams K.L."/>
            <person name="Hochstrasser D.F."/>
        </authorList>
    </citation>
    <scope>PROTEIN SEQUENCE OF 2-5</scope>
    <source>
        <strain>K12 / W3110 / ATCC 27325 / DSM 5911</strain>
    </source>
</reference>
<reference key="11">
    <citation type="journal article" date="1976" name="J. Biol. Chem.">
        <title>Sugar transport. The crr mutation: its effect on repression of enzyme synthesis.</title>
        <authorList>
            <person name="Saier M.H. Jr."/>
            <person name="Roseman S."/>
        </authorList>
    </citation>
    <scope>FUNCTION</scope>
    <scope>DISRUPTION PHENOTYPE</scope>
</reference>
<reference key="12">
    <citation type="journal article" date="1984" name="Eur. J. Biochem.">
        <title>Phosphoenolpyruvate-dependent phosphorylation site in enzyme IIIglc of the Escherichia coli phosphotransferase system.</title>
        <authorList>
            <person name="Doerschug M."/>
            <person name="Frank R."/>
            <person name="Kalbitzer H.R."/>
            <person name="Hengstenberg W."/>
            <person name="Deutscher J."/>
        </authorList>
    </citation>
    <scope>ACTIVE SITE</scope>
</reference>
<reference key="13">
    <citation type="journal article" date="1988" name="J. Biol. Chem.">
        <title>Glucose permease of Escherichia coli. The effect of cysteine to serine mutations on the function, stability, and regulation of transport and phosphorylation.</title>
        <authorList>
            <person name="Nuoffer C."/>
            <person name="Zanolari B."/>
            <person name="Erni B."/>
        </authorList>
    </citation>
    <scope>FUNCTION</scope>
    <scope>CATALYTIC ACTIVITY</scope>
</reference>
<reference key="14">
    <citation type="journal article" date="1989" name="Proc. Natl. Acad. Sci. U.S.A.">
        <title>Site-directed mutagenesis of the phosphocarrier protein. IIIGlc, a major signal-transducing protein in Escherichia coli.</title>
        <authorList>
            <person name="Presper K.A."/>
            <person name="Wong C.Y."/>
            <person name="Liu L."/>
            <person name="Meadow N.D."/>
            <person name="Roseman S."/>
        </authorList>
    </citation>
    <scope>FUNCTION</scope>
    <scope>MUTAGENESIS OF PHE-4; HIS-76 AND HIS-91</scope>
    <scope>ACTIVE SITE</scope>
    <scope>COFACTOR</scope>
    <scope>PHOSPHORYLATION AT HIS-91</scope>
</reference>
<reference key="15">
    <citation type="journal article" date="1997" name="Electrophoresis">
        <title>Escherichia coli proteome analysis using the gene-protein database.</title>
        <authorList>
            <person name="VanBogelen R.A."/>
            <person name="Abshire K.Z."/>
            <person name="Moldover B."/>
            <person name="Olson E.R."/>
            <person name="Neidhardt F.C."/>
        </authorList>
    </citation>
    <scope>IDENTIFICATION BY 2D-GEL</scope>
</reference>
<reference key="16">
    <citation type="journal article" date="2006" name="Microbiol. Mol. Biol. Rev.">
        <title>How phosphotransferase system-related protein phosphorylation regulates carbohydrate metabolism in bacteria.</title>
        <authorList>
            <person name="Deutscher J."/>
            <person name="Francke C."/>
            <person name="Postma P.W."/>
        </authorList>
    </citation>
    <scope>FUNCTION</scope>
</reference>
<reference key="17">
    <citation type="journal article" date="1991" name="Proc. Natl. Acad. Sci. U.S.A.">
        <title>Three-dimensional structure of the Escherichia coli phosphocarrier protein IIIglc.</title>
        <authorList>
            <person name="Worthylake D."/>
            <person name="Meadow N.D."/>
            <person name="Roseman S."/>
            <person name="Liao D.-I."/>
            <person name="Herzberg O."/>
            <person name="Remington S.J."/>
        </authorList>
    </citation>
    <scope>X-RAY CRYSTALLOGRAPHY (2.5 ANGSTROMS)</scope>
    <scope>ACTIVE SITE</scope>
    <scope>COFACTOR</scope>
</reference>
<reference key="18">
    <citation type="journal article" date="1993" name="Science">
        <title>Structure of the regulatory complex of Escherichia coli IIIGlc with glycerol kinase.</title>
        <authorList>
            <person name="Hurley J.H."/>
            <person name="Faber H.R."/>
            <person name="Worthylake D."/>
            <person name="Meadow N.D."/>
            <person name="Roseman S."/>
            <person name="Pettigrew D.W."/>
            <person name="Remington S.J."/>
        </authorList>
    </citation>
    <scope>X-RAY CRYSTALLOGRAPHY (2.6 ANGSTROMS) IN COMPLEX WITH GLYCEROL KINASE</scope>
    <scope>SUBUNIT</scope>
</reference>
<reference key="19">
    <citation type="journal article" date="1994" name="Proc. Natl. Acad. Sci. U.S.A.">
        <title>Cation-promoted association of a regulatory and target protein is controlled by protein phosphorylation.</title>
        <authorList>
            <person name="Feese M."/>
            <person name="Pettigrew D.W."/>
            <person name="Meadow N.D."/>
            <person name="Roseman S."/>
            <person name="Remington S.J."/>
        </authorList>
    </citation>
    <scope>X-RAY CRYSTALLOGRAPHY (2.65 ANGSTROMS) OF 2-169 IN COMPLEX WITH GLYCEROL KINASE AND ZINC ION</scope>
    <scope>COFACTOR</scope>
    <scope>SUBUNIT</scope>
</reference>
<reference key="20">
    <citation type="journal article" date="1997" name="Biochemistry">
        <title>Structural studies of the Escherichia coli signal transducing protein IIAGlc: implications for target recognition.</title>
        <authorList>
            <person name="Feese M.D."/>
            <person name="Comolli L."/>
            <person name="Meadow N.D."/>
            <person name="Roseman S."/>
            <person name="Remington S.J."/>
        </authorList>
    </citation>
    <scope>X-RAY CRYSTALLOGRAPHY (1.98 ANGSTROMS) OF 9-169 IN COMPLEX WITH ZINC ION</scope>
    <scope>COFACTOR</scope>
    <scope>ACTIVE SITE</scope>
    <scope>SUBUNIT</scope>
</reference>
<reference key="21">
    <citation type="journal article" date="1991" name="Biochemistry">
        <title>1H, 15N, and 13C NMR signal assignments of IIIGlc, a signal-transducing protein of Escherichia coli, using three-dimensional triple-resonance techniques.</title>
        <authorList>
            <person name="Pelton J.G."/>
            <person name="Torchia D.A."/>
            <person name="Meadow N.D."/>
            <person name="Wong C.Y."/>
            <person name="Roseman S."/>
        </authorList>
    </citation>
    <scope>STRUCTURE BY NMR</scope>
</reference>
<reference key="22">
    <citation type="journal article" date="1991" name="Proc. Natl. Acad. Sci. U.S.A.">
        <title>Secondary structure of the phosphocarrier protein IIIGlc, a signal-transducing protein from Escherichia coli, determined by heteronuclear three-dimensional NMR spectroscopy.</title>
        <authorList>
            <person name="Pelton J.G."/>
            <person name="Torchia D.A."/>
            <person name="Meadow N.D."/>
            <person name="Wong C.-Y."/>
            <person name="Roseman S."/>
        </authorList>
    </citation>
    <scope>STRUCTURE BY NMR</scope>
</reference>
<reference key="23">
    <citation type="journal article" date="1992" name="Biochemistry">
        <title>Structural comparison of phosphorylated and unphosphorylated forms of IIIGlc, a signal-transducing protein from Escherichia coli, using three-dimensional NMR techniques.</title>
        <authorList>
            <person name="Pelton J.G."/>
            <person name="Torchia D.A."/>
            <person name="Meadow N.D."/>
            <person name="Roseman S."/>
        </authorList>
    </citation>
    <scope>STRUCTURE BY NMR</scope>
</reference>
<accession>P69783</accession>
<accession>P08837</accession>
<accession>Q47703</accession>
<protein>
    <recommendedName>
        <fullName evidence="12">PTS system glucose-specific EIIA component</fullName>
    </recommendedName>
    <alternativeName>
        <fullName evidence="12">EIIA-Glc</fullName>
    </alternativeName>
    <alternativeName>
        <fullName evidence="12">EIII-Glc</fullName>
    </alternativeName>
    <alternativeName>
        <fullName evidence="14">Glucose-specific phosphotransferase enzyme IIA component</fullName>
    </alternativeName>
</protein>
<proteinExistence type="evidence at protein level"/>
<dbReference type="EMBL" id="J02796">
    <property type="protein sequence ID" value="AAA24442.1"/>
    <property type="molecule type" value="Genomic_DNA"/>
</dbReference>
<dbReference type="EMBL" id="M21994">
    <property type="protein sequence ID" value="AAA24386.1"/>
    <property type="molecule type" value="Genomic_DNA"/>
</dbReference>
<dbReference type="EMBL" id="M93578">
    <property type="protein sequence ID" value="AAA23602.1"/>
    <property type="molecule type" value="Genomic_DNA"/>
</dbReference>
<dbReference type="EMBL" id="M93579">
    <property type="protein sequence ID" value="AAA23605.1"/>
    <property type="molecule type" value="Genomic_DNA"/>
</dbReference>
<dbReference type="EMBL" id="M93580">
    <property type="protein sequence ID" value="AAA23603.1"/>
    <property type="molecule type" value="Genomic_DNA"/>
</dbReference>
<dbReference type="EMBL" id="M93581">
    <property type="protein sequence ID" value="AAA23606.1"/>
    <property type="molecule type" value="Genomic_DNA"/>
</dbReference>
<dbReference type="EMBL" id="M93582">
    <property type="protein sequence ID" value="AAA23604.1"/>
    <property type="molecule type" value="Genomic_DNA"/>
</dbReference>
<dbReference type="EMBL" id="M93584">
    <property type="protein sequence ID" value="AAA23610.1"/>
    <property type="molecule type" value="Genomic_DNA"/>
</dbReference>
<dbReference type="EMBL" id="M93587">
    <property type="protein sequence ID" value="AAA23612.1"/>
    <property type="molecule type" value="Genomic_DNA"/>
</dbReference>
<dbReference type="EMBL" id="M93594">
    <property type="protein sequence ID" value="AAA23607.1"/>
    <property type="molecule type" value="Genomic_DNA"/>
</dbReference>
<dbReference type="EMBL" id="M93595">
    <property type="protein sequence ID" value="AAA23608.1"/>
    <property type="molecule type" value="Genomic_DNA"/>
</dbReference>
<dbReference type="EMBL" id="M93596">
    <property type="protein sequence ID" value="AAA23611.1"/>
    <property type="molecule type" value="Genomic_DNA"/>
</dbReference>
<dbReference type="EMBL" id="M93597">
    <property type="protein sequence ID" value="AAA23609.1"/>
    <property type="molecule type" value="Genomic_DNA"/>
</dbReference>
<dbReference type="EMBL" id="M93598">
    <property type="protein sequence ID" value="AAA23613.1"/>
    <property type="molecule type" value="Genomic_DNA"/>
</dbReference>
<dbReference type="EMBL" id="U53700">
    <property type="protein sequence ID" value="AAC44167.1"/>
    <property type="molecule type" value="Genomic_DNA"/>
</dbReference>
<dbReference type="EMBL" id="U00096">
    <property type="protein sequence ID" value="AAC75470.1"/>
    <property type="molecule type" value="Genomic_DNA"/>
</dbReference>
<dbReference type="EMBL" id="AP009048">
    <property type="protein sequence ID" value="BAA16291.1"/>
    <property type="molecule type" value="Genomic_DNA"/>
</dbReference>
<dbReference type="PIR" id="C29785">
    <property type="entry name" value="WQECP3"/>
</dbReference>
<dbReference type="RefSeq" id="NP_416912.1">
    <property type="nucleotide sequence ID" value="NC_000913.3"/>
</dbReference>
<dbReference type="RefSeq" id="WP_000522247.1">
    <property type="nucleotide sequence ID" value="NZ_STEB01000039.1"/>
</dbReference>
<dbReference type="PDB" id="1F3G">
    <property type="method" value="X-ray"/>
    <property type="resolution" value="2.10 A"/>
    <property type="chains" value="A=9-169"/>
</dbReference>
<dbReference type="PDB" id="1F3Z">
    <property type="method" value="X-ray"/>
    <property type="resolution" value="1.98 A"/>
    <property type="chains" value="A=9-169"/>
</dbReference>
<dbReference type="PDB" id="1GGR">
    <property type="method" value="NMR"/>
    <property type="chains" value="A=2-169"/>
</dbReference>
<dbReference type="PDB" id="1GLA">
    <property type="method" value="X-ray"/>
    <property type="resolution" value="2.60 A"/>
    <property type="chains" value="F=2-169"/>
</dbReference>
<dbReference type="PDB" id="1GLB">
    <property type="method" value="X-ray"/>
    <property type="resolution" value="2.60 A"/>
    <property type="chains" value="F=2-169"/>
</dbReference>
<dbReference type="PDB" id="1GLC">
    <property type="method" value="X-ray"/>
    <property type="resolution" value="2.65 A"/>
    <property type="chains" value="F=2-169"/>
</dbReference>
<dbReference type="PDB" id="1GLD">
    <property type="method" value="X-ray"/>
    <property type="resolution" value="2.93 A"/>
    <property type="chains" value="F=2-169"/>
</dbReference>
<dbReference type="PDB" id="1GLE">
    <property type="method" value="X-ray"/>
    <property type="resolution" value="2.94 A"/>
    <property type="chains" value="F=2-169"/>
</dbReference>
<dbReference type="PDB" id="1O2F">
    <property type="method" value="NMR"/>
    <property type="chains" value="A=2-169"/>
</dbReference>
<dbReference type="PDB" id="2F3G">
    <property type="method" value="X-ray"/>
    <property type="resolution" value="2.13 A"/>
    <property type="chains" value="A/B=2-169"/>
</dbReference>
<dbReference type="PDB" id="2MP0">
    <property type="method" value="NMR"/>
    <property type="chains" value="B=2-169"/>
</dbReference>
<dbReference type="PDB" id="4JBW">
    <property type="method" value="X-ray"/>
    <property type="resolution" value="3.91 A"/>
    <property type="chains" value="M/N/O/P=1-169"/>
</dbReference>
<dbReference type="PDBsum" id="1F3G"/>
<dbReference type="PDBsum" id="1F3Z"/>
<dbReference type="PDBsum" id="1GGR"/>
<dbReference type="PDBsum" id="1GLA"/>
<dbReference type="PDBsum" id="1GLB"/>
<dbReference type="PDBsum" id="1GLC"/>
<dbReference type="PDBsum" id="1GLD"/>
<dbReference type="PDBsum" id="1GLE"/>
<dbReference type="PDBsum" id="1O2F"/>
<dbReference type="PDBsum" id="2F3G"/>
<dbReference type="PDBsum" id="2MP0"/>
<dbReference type="PDBsum" id="4JBW"/>
<dbReference type="BMRB" id="P69783"/>
<dbReference type="SMR" id="P69783"/>
<dbReference type="BioGRID" id="4260572">
    <property type="interactions" value="37"/>
</dbReference>
<dbReference type="ComplexPortal" id="CPX-1978">
    <property type="entry name" value="Enzyme IIA-maltose transport inhibitory complex"/>
</dbReference>
<dbReference type="ComplexPortal" id="CPX-5943">
    <property type="entry name" value="Glucose-specific enzyme II complex"/>
</dbReference>
<dbReference type="DIP" id="DIP-31863N"/>
<dbReference type="FunCoup" id="P69783">
    <property type="interactions" value="240"/>
</dbReference>
<dbReference type="IntAct" id="P69783">
    <property type="interactions" value="5"/>
</dbReference>
<dbReference type="STRING" id="511145.b2417"/>
<dbReference type="TCDB" id="4.A.1.1.1">
    <property type="family name" value="the pts glucose-glucoside (glc) family"/>
</dbReference>
<dbReference type="iPTMnet" id="P69783"/>
<dbReference type="jPOST" id="P69783"/>
<dbReference type="PaxDb" id="511145-b2417"/>
<dbReference type="EnsemblBacteria" id="AAC75470">
    <property type="protein sequence ID" value="AAC75470"/>
    <property type="gene ID" value="b2417"/>
</dbReference>
<dbReference type="GeneID" id="93774714"/>
<dbReference type="GeneID" id="946880"/>
<dbReference type="KEGG" id="ecj:JW2410"/>
<dbReference type="KEGG" id="eco:b2417"/>
<dbReference type="KEGG" id="ecoc:C3026_13435"/>
<dbReference type="PATRIC" id="fig|1411691.4.peg.4314"/>
<dbReference type="EchoBASE" id="EB0163"/>
<dbReference type="eggNOG" id="COG2190">
    <property type="taxonomic scope" value="Bacteria"/>
</dbReference>
<dbReference type="HOGENOM" id="CLU_012312_5_1_6"/>
<dbReference type="InParanoid" id="P69783"/>
<dbReference type="OMA" id="KMVAPCD"/>
<dbReference type="PhylomeDB" id="P69783"/>
<dbReference type="BioCyc" id="EcoCyc:CRR-MONOMER"/>
<dbReference type="BioCyc" id="MetaCyc:CRR-MONOMER"/>
<dbReference type="BRENDA" id="2.7.1.199">
    <property type="organism ID" value="2026"/>
</dbReference>
<dbReference type="EvolutionaryTrace" id="P69783"/>
<dbReference type="PRO" id="PR:P69783"/>
<dbReference type="Proteomes" id="UP000000625">
    <property type="component" value="Chromosome"/>
</dbReference>
<dbReference type="GO" id="GO:0005829">
    <property type="term" value="C:cytosol"/>
    <property type="evidence" value="ECO:0000314"/>
    <property type="project" value="EcoCyc"/>
</dbReference>
<dbReference type="GO" id="GO:1990154">
    <property type="term" value="C:enzyme IIA-maltose transporter complex"/>
    <property type="evidence" value="ECO:0000353"/>
    <property type="project" value="ComplexPortal"/>
</dbReference>
<dbReference type="GO" id="GO:0016020">
    <property type="term" value="C:membrane"/>
    <property type="evidence" value="ECO:0007005"/>
    <property type="project" value="UniProtKB"/>
</dbReference>
<dbReference type="GO" id="GO:1902495">
    <property type="term" value="C:transmembrane transporter complex"/>
    <property type="evidence" value="ECO:0000353"/>
    <property type="project" value="ComplexPortal"/>
</dbReference>
<dbReference type="GO" id="GO:0016301">
    <property type="term" value="F:kinase activity"/>
    <property type="evidence" value="ECO:0000314"/>
    <property type="project" value="EcoCyc"/>
</dbReference>
<dbReference type="GO" id="GO:0046872">
    <property type="term" value="F:metal ion binding"/>
    <property type="evidence" value="ECO:0007669"/>
    <property type="project" value="UniProtKB-KW"/>
</dbReference>
<dbReference type="GO" id="GO:0045912">
    <property type="term" value="P:negative regulation of carbohydrate metabolic process"/>
    <property type="evidence" value="ECO:0000314"/>
    <property type="project" value="EcoCyc"/>
</dbReference>
<dbReference type="GO" id="GO:1902344">
    <property type="term" value="P:negative regulation of maltose transport"/>
    <property type="evidence" value="ECO:0000303"/>
    <property type="project" value="ComplexPortal"/>
</dbReference>
<dbReference type="GO" id="GO:0034763">
    <property type="term" value="P:negative regulation of transmembrane transport"/>
    <property type="evidence" value="ECO:0000303"/>
    <property type="project" value="ComplexPortal"/>
</dbReference>
<dbReference type="GO" id="GO:0009401">
    <property type="term" value="P:phosphoenolpyruvate-dependent sugar phosphotransferase system"/>
    <property type="evidence" value="ECO:0000314"/>
    <property type="project" value="ComplexPortal"/>
</dbReference>
<dbReference type="GO" id="GO:0043610">
    <property type="term" value="P:regulation of carbohydrate utilization"/>
    <property type="evidence" value="ECO:0000269"/>
    <property type="project" value="EcoCyc"/>
</dbReference>
<dbReference type="CDD" id="cd00210">
    <property type="entry name" value="PTS_IIA_glc"/>
    <property type="match status" value="1"/>
</dbReference>
<dbReference type="FunFam" id="2.70.70.10:FF:000001">
    <property type="entry name" value="PTS system glucose-specific IIA component"/>
    <property type="match status" value="1"/>
</dbReference>
<dbReference type="Gene3D" id="2.70.70.10">
    <property type="entry name" value="Glucose Permease (Domain IIA)"/>
    <property type="match status" value="1"/>
</dbReference>
<dbReference type="InterPro" id="IPR011055">
    <property type="entry name" value="Dup_hybrid_motif"/>
</dbReference>
<dbReference type="InterPro" id="IPR001127">
    <property type="entry name" value="PTS_EIIA_1_perm"/>
</dbReference>
<dbReference type="InterPro" id="IPR050890">
    <property type="entry name" value="PTS_EIIA_component"/>
</dbReference>
<dbReference type="NCBIfam" id="NF006962">
    <property type="entry name" value="PRK09439.1"/>
    <property type="match status" value="1"/>
</dbReference>
<dbReference type="NCBIfam" id="TIGR00830">
    <property type="entry name" value="PTBA"/>
    <property type="match status" value="1"/>
</dbReference>
<dbReference type="PANTHER" id="PTHR45008">
    <property type="entry name" value="PTS SYSTEM GLUCOSE-SPECIFIC EIIA COMPONENT"/>
    <property type="match status" value="1"/>
</dbReference>
<dbReference type="PANTHER" id="PTHR45008:SF1">
    <property type="entry name" value="PTS SYSTEM GLUCOSE-SPECIFIC EIIA COMPONENT"/>
    <property type="match status" value="1"/>
</dbReference>
<dbReference type="Pfam" id="PF00358">
    <property type="entry name" value="PTS_EIIA_1"/>
    <property type="match status" value="1"/>
</dbReference>
<dbReference type="SUPFAM" id="SSF51261">
    <property type="entry name" value="Duplicated hybrid motif"/>
    <property type="match status" value="1"/>
</dbReference>
<dbReference type="PROSITE" id="PS51093">
    <property type="entry name" value="PTS_EIIA_TYPE_1"/>
    <property type="match status" value="1"/>
</dbReference>
<dbReference type="PROSITE" id="PS00371">
    <property type="entry name" value="PTS_EIIA_TYPE_1_HIS"/>
    <property type="match status" value="1"/>
</dbReference>
<organism>
    <name type="scientific">Escherichia coli (strain K12)</name>
    <dbReference type="NCBI Taxonomy" id="83333"/>
    <lineage>
        <taxon>Bacteria</taxon>
        <taxon>Pseudomonadati</taxon>
        <taxon>Pseudomonadota</taxon>
        <taxon>Gammaproteobacteria</taxon>
        <taxon>Enterobacterales</taxon>
        <taxon>Enterobacteriaceae</taxon>
        <taxon>Escherichia</taxon>
    </lineage>
</organism>
<gene>
    <name evidence="13" type="primary">crr</name>
    <name type="synonym">gsr</name>
    <name type="synonym">iex</name>
    <name type="synonym">tgs</name>
    <name type="synonym">treD</name>
    <name type="ordered locus">b2417</name>
    <name type="ordered locus">JW2410</name>
</gene>
<feature type="initiator methionine" description="Removed" evidence="8 10 11">
    <location>
        <position position="1"/>
    </location>
</feature>
<feature type="chain" id="PRO_0000186532" description="PTS system glucose-specific EIIA component">
    <location>
        <begin position="2"/>
        <end position="169"/>
    </location>
</feature>
<feature type="domain" description="PTS EIIA type-1" evidence="1">
    <location>
        <begin position="39"/>
        <end position="143"/>
    </location>
</feature>
<feature type="active site" description="Tele-phosphohistidine intermediate; for EIIA activity" evidence="1 2 4 17 18">
    <location>
        <position position="91"/>
    </location>
</feature>
<feature type="binding site" evidence="2 6 9 17">
    <location>
        <position position="76"/>
    </location>
    <ligand>
        <name>Zn(2+)</name>
        <dbReference type="ChEBI" id="CHEBI:29105"/>
        <note>ligand shared with glycerol kinase</note>
    </ligand>
</feature>
<feature type="binding site" evidence="2 6 9 17">
    <location>
        <position position="91"/>
    </location>
    <ligand>
        <name>Zn(2+)</name>
        <dbReference type="ChEBI" id="CHEBI:29105"/>
        <note>ligand shared with glycerol kinase</note>
    </ligand>
</feature>
<feature type="site" description="Important for phospho-donor activity" evidence="2">
    <location>
        <position position="76"/>
    </location>
</feature>
<feature type="modified residue" description="Phosphohistidine; by HPr" evidence="2">
    <location>
        <position position="91"/>
    </location>
</feature>
<feature type="mutagenesis site" description="Same activity as the wild-type." evidence="2">
    <original>F</original>
    <variation>W</variation>
    <location>
        <position position="4"/>
    </location>
</feature>
<feature type="mutagenesis site" description="Unable to transfer phosphoryl group." evidence="2">
    <original>H</original>
    <variation>Q</variation>
    <location>
        <position position="76"/>
    </location>
</feature>
<feature type="mutagenesis site" description="Unable to be phosphorylated by Hpr." evidence="2">
    <original>H</original>
    <variation>Q</variation>
    <location>
        <position position="91"/>
    </location>
</feature>
<feature type="sequence conflict" description="In Ref. 3; AAC44167." evidence="15" ref="3">
    <location>
        <begin position="23"/>
        <end position="31"/>
    </location>
</feature>
<feature type="strand" evidence="23">
    <location>
        <begin position="5"/>
        <end position="7"/>
    </location>
</feature>
<feature type="strand" evidence="20">
    <location>
        <begin position="21"/>
        <end position="24"/>
    </location>
</feature>
<feature type="strand" evidence="20">
    <location>
        <begin position="29"/>
        <end position="33"/>
    </location>
</feature>
<feature type="helix" evidence="20">
    <location>
        <begin position="34"/>
        <end position="36"/>
    </location>
</feature>
<feature type="strand" evidence="20">
    <location>
        <begin position="37"/>
        <end position="39"/>
    </location>
</feature>
<feature type="helix" evidence="20">
    <location>
        <begin position="40"/>
        <end position="43"/>
    </location>
</feature>
<feature type="strand" evidence="21">
    <location>
        <begin position="45"/>
        <end position="47"/>
    </location>
</feature>
<feature type="strand" evidence="20">
    <location>
        <begin position="49"/>
        <end position="55"/>
    </location>
</feature>
<feature type="strand" evidence="20">
    <location>
        <begin position="57"/>
        <end position="61"/>
    </location>
</feature>
<feature type="strand" evidence="20">
    <location>
        <begin position="63"/>
        <end position="71"/>
    </location>
</feature>
<feature type="strand" evidence="20">
    <location>
        <begin position="75"/>
        <end position="82"/>
    </location>
</feature>
<feature type="turn" evidence="22">
    <location>
        <begin position="83"/>
        <end position="85"/>
    </location>
</feature>
<feature type="strand" evidence="20">
    <location>
        <begin position="87"/>
        <end position="91"/>
    </location>
</feature>
<feature type="strand" evidence="20">
    <location>
        <begin position="93"/>
        <end position="95"/>
    </location>
</feature>
<feature type="helix" evidence="20">
    <location>
        <begin position="96"/>
        <end position="99"/>
    </location>
</feature>
<feature type="turn" evidence="20">
    <location>
        <begin position="100"/>
        <end position="103"/>
    </location>
</feature>
<feature type="strand" evidence="20">
    <location>
        <begin position="104"/>
        <end position="106"/>
    </location>
</feature>
<feature type="strand" evidence="20">
    <location>
        <begin position="119"/>
        <end position="123"/>
    </location>
</feature>
<feature type="helix" evidence="20">
    <location>
        <begin position="125"/>
        <end position="131"/>
    </location>
</feature>
<feature type="strand" evidence="19">
    <location>
        <begin position="132"/>
        <end position="134"/>
    </location>
</feature>
<feature type="strand" evidence="20">
    <location>
        <begin position="137"/>
        <end position="142"/>
    </location>
</feature>
<feature type="helix" evidence="20">
    <location>
        <begin position="144"/>
        <end position="146"/>
    </location>
</feature>
<feature type="strand" evidence="20">
    <location>
        <begin position="148"/>
        <end position="152"/>
    </location>
</feature>
<feature type="strand" evidence="20">
    <location>
        <begin position="155"/>
        <end position="157"/>
    </location>
</feature>
<feature type="turn" evidence="20">
    <location>
        <begin position="159"/>
        <end position="161"/>
    </location>
</feature>
<feature type="strand" evidence="20">
    <location>
        <begin position="162"/>
        <end position="168"/>
    </location>
</feature>
<evidence type="ECO:0000255" key="1">
    <source>
        <dbReference type="PROSITE-ProRule" id="PRU00416"/>
    </source>
</evidence>
<evidence type="ECO:0000269" key="2">
    <source>
    </source>
</evidence>
<evidence type="ECO:0000269" key="3">
    <source>
    </source>
</evidence>
<evidence type="ECO:0000269" key="4">
    <source>
    </source>
</evidence>
<evidence type="ECO:0000269" key="5">
    <source>
    </source>
</evidence>
<evidence type="ECO:0000269" key="6">
    <source>
    </source>
</evidence>
<evidence type="ECO:0000269" key="7">
    <source>
    </source>
</evidence>
<evidence type="ECO:0000269" key="8">
    <source>
    </source>
</evidence>
<evidence type="ECO:0000269" key="9">
    <source>
    </source>
</evidence>
<evidence type="ECO:0000269" key="10">
    <source>
    </source>
</evidence>
<evidence type="ECO:0000269" key="11">
    <source ref="9"/>
</evidence>
<evidence type="ECO:0000303" key="12">
    <source>
    </source>
</evidence>
<evidence type="ECO:0000303" key="13">
    <source>
    </source>
</evidence>
<evidence type="ECO:0000303" key="14">
    <source>
    </source>
</evidence>
<evidence type="ECO:0000305" key="15"/>
<evidence type="ECO:0000305" key="16">
    <source>
    </source>
</evidence>
<evidence type="ECO:0000305" key="17">
    <source>
    </source>
</evidence>
<evidence type="ECO:0000305" key="18">
    <source>
    </source>
</evidence>
<evidence type="ECO:0007829" key="19">
    <source>
        <dbReference type="PDB" id="1F3G"/>
    </source>
</evidence>
<evidence type="ECO:0007829" key="20">
    <source>
        <dbReference type="PDB" id="1F3Z"/>
    </source>
</evidence>
<evidence type="ECO:0007829" key="21">
    <source>
        <dbReference type="PDB" id="1GLA"/>
    </source>
</evidence>
<evidence type="ECO:0007829" key="22">
    <source>
        <dbReference type="PDB" id="1GLB"/>
    </source>
</evidence>
<evidence type="ECO:0007829" key="23">
    <source>
        <dbReference type="PDB" id="1GLC"/>
    </source>
</evidence>
<keyword id="KW-0002">3D-structure</keyword>
<keyword id="KW-0963">Cytoplasm</keyword>
<keyword id="KW-0903">Direct protein sequencing</keyword>
<keyword id="KW-0418">Kinase</keyword>
<keyword id="KW-0479">Metal-binding</keyword>
<keyword id="KW-0597">Phosphoprotein</keyword>
<keyword id="KW-0598">Phosphotransferase system</keyword>
<keyword id="KW-1185">Reference proteome</keyword>
<keyword id="KW-0762">Sugar transport</keyword>
<keyword id="KW-0808">Transferase</keyword>
<keyword id="KW-0813">Transport</keyword>
<keyword id="KW-0862">Zinc</keyword>
<sequence length="169" mass="18251">MGLFDKLKSLVSDDKKDTGTIEIIAPLSGEIVNIEDVPDVVFAEKIVGDGIAIKPTGNKMVAPVDGTIGKIFETNHAFSIESDSGVELFVHFGIDTVELKGEGFKRIAEEGQRVKVGDTVIEFDLPLLEEKAKSTLTPVVISNMDEIKELIKLSGSVTVGETPVIRIKK</sequence>